<name>TRMBR_PYRFU</name>
<protein>
    <recommendedName>
        <fullName>HTH-type sugar sensing transcriptional regulator TrmB</fullName>
    </recommendedName>
</protein>
<gene>
    <name type="primary">trmB</name>
    <name type="ordered locus">PF1743</name>
</gene>
<sequence>MEIPPEISHALSEIGFTKYEILTYWTLLVYGPSTAKEISTKSGIPYNRVYDTISSLKLRGFVTEIEGTPKVYAAYSPRIAFFRFKKELEDIMKKLEIELNNVKKEEQRPAIWRSRSFDEAIEMFRESLYSAKNEVIVVTPSEFFETIREDLIKTLERGVTVSLYIDKIPDLSEFKGKGNFFVRQFYKLNHLIGMTDGKEVVTIQNATFDSIGPPSFKSTYPEIIFSQYSLIIEIFKESTLEKEIIGNPKDIRFFAMFHAVDFVKNHLKNRNIYAEITGKNLESGRLETLTGRVVGYTLSLREAVNNIHLETENGVVKVGGMFAVIEDYESTEIKFIMG</sequence>
<proteinExistence type="evidence at protein level"/>
<dbReference type="EMBL" id="AF307052">
    <property type="protein sequence ID" value="AAG45376.1"/>
    <property type="molecule type" value="Genomic_DNA"/>
</dbReference>
<dbReference type="EMBL" id="AE009950">
    <property type="protein sequence ID" value="AAL81867.1"/>
    <property type="molecule type" value="Genomic_DNA"/>
</dbReference>
<dbReference type="RefSeq" id="WP_004068718.1">
    <property type="nucleotide sequence ID" value="NC_003413.1"/>
</dbReference>
<dbReference type="PDB" id="3QPH">
    <property type="method" value="X-ray"/>
    <property type="resolution" value="2.99 A"/>
    <property type="chains" value="A=1-338"/>
</dbReference>
<dbReference type="PDBsum" id="3QPH"/>
<dbReference type="SMR" id="Q9HGZ9"/>
<dbReference type="STRING" id="186497.PF1743"/>
<dbReference type="PaxDb" id="186497-PF1743"/>
<dbReference type="GeneID" id="16548945"/>
<dbReference type="KEGG" id="pfu:PF1743"/>
<dbReference type="PATRIC" id="fig|186497.12.peg.1812"/>
<dbReference type="eggNOG" id="arCOG02038">
    <property type="taxonomic scope" value="Archaea"/>
</dbReference>
<dbReference type="HOGENOM" id="CLU_062979_2_0_2"/>
<dbReference type="OrthoDB" id="96194at2157"/>
<dbReference type="PhylomeDB" id="Q9HGZ9"/>
<dbReference type="EvolutionaryTrace" id="Q9HGZ9"/>
<dbReference type="Proteomes" id="UP000001013">
    <property type="component" value="Chromosome"/>
</dbReference>
<dbReference type="GO" id="GO:0003677">
    <property type="term" value="F:DNA binding"/>
    <property type="evidence" value="ECO:0007669"/>
    <property type="project" value="UniProtKB-KW"/>
</dbReference>
<dbReference type="CDD" id="cd09124">
    <property type="entry name" value="PLDc_like_TrmB_middle"/>
    <property type="match status" value="1"/>
</dbReference>
<dbReference type="Gene3D" id="2.30.30.690">
    <property type="match status" value="1"/>
</dbReference>
<dbReference type="Gene3D" id="3.30.870.10">
    <property type="entry name" value="Endonuclease Chain A"/>
    <property type="match status" value="1"/>
</dbReference>
<dbReference type="Gene3D" id="1.10.10.10">
    <property type="entry name" value="Winged helix-like DNA-binding domain superfamily/Winged helix DNA-binding domain"/>
    <property type="match status" value="1"/>
</dbReference>
<dbReference type="InterPro" id="IPR054965">
    <property type="entry name" value="tran_reg_TrmB"/>
</dbReference>
<dbReference type="InterPro" id="IPR051797">
    <property type="entry name" value="TrmB-like"/>
</dbReference>
<dbReference type="InterPro" id="IPR021586">
    <property type="entry name" value="Tscrpt_reg_TrmB_C"/>
</dbReference>
<dbReference type="InterPro" id="IPR002831">
    <property type="entry name" value="Tscrpt_reg_TrmB_N"/>
</dbReference>
<dbReference type="InterPro" id="IPR036388">
    <property type="entry name" value="WH-like_DNA-bd_sf"/>
</dbReference>
<dbReference type="InterPro" id="IPR036390">
    <property type="entry name" value="WH_DNA-bd_sf"/>
</dbReference>
<dbReference type="NCBIfam" id="NF040851">
    <property type="entry name" value="tran_reg_TrmB"/>
    <property type="match status" value="1"/>
</dbReference>
<dbReference type="PANTHER" id="PTHR34293">
    <property type="entry name" value="HTH-TYPE TRANSCRIPTIONAL REGULATOR TRMBL2"/>
    <property type="match status" value="1"/>
</dbReference>
<dbReference type="PANTHER" id="PTHR34293:SF1">
    <property type="entry name" value="HTH-TYPE TRANSCRIPTIONAL REGULATOR TRMBL2"/>
    <property type="match status" value="1"/>
</dbReference>
<dbReference type="Pfam" id="PF11495">
    <property type="entry name" value="Regulator_TrmB"/>
    <property type="match status" value="1"/>
</dbReference>
<dbReference type="Pfam" id="PF01978">
    <property type="entry name" value="TrmB"/>
    <property type="match status" value="1"/>
</dbReference>
<dbReference type="SUPFAM" id="SSF56024">
    <property type="entry name" value="Phospholipase D/nuclease"/>
    <property type="match status" value="1"/>
</dbReference>
<dbReference type="SUPFAM" id="SSF159071">
    <property type="entry name" value="TrmB C-terminal domain-like"/>
    <property type="match status" value="1"/>
</dbReference>
<dbReference type="SUPFAM" id="SSF46785">
    <property type="entry name" value="Winged helix' DNA-binding domain"/>
    <property type="match status" value="1"/>
</dbReference>
<comment type="function">
    <text evidence="2 3">Inhibits transcription of the trehalose/maltose transport gene cluster (malE operon) and of the maltodextrin transport gene cluster (mdxE operon). Acts by binding to two different operator sequences in both promoters, preventing polymerase recruitment and transcription.</text>
</comment>
<comment type="activity regulation">
    <text evidence="2 3 4">Repressor activity is regulated by binding of different sugars to TrmB. These sugars can act as inducers or corepressors. Binding of maltose and trehalose results in derepression of the malE operon, and binding of maltotriose, larger maltodextrins and, to a minor extent, sucrose results in derepression of the mdxE operon. In contrast, binding of glucose causes stronger repression of the malE and mdxE operons. Maltose may also act as a corepressor of the mdxE operon.</text>
</comment>
<comment type="subunit">
    <text evidence="3 5">Homodimer.</text>
</comment>
<comment type="domain">
    <text evidence="5">Contains an N-terminal DNA-binding domain and a C-terminal sugar-binding domain.</text>
</comment>
<comment type="similarity">
    <text evidence="6">Belongs to the transcriptional regulator TrmB family.</text>
</comment>
<evidence type="ECO:0000255" key="1"/>
<evidence type="ECO:0000269" key="2">
    <source>
    </source>
</evidence>
<evidence type="ECO:0000269" key="3">
    <source>
    </source>
</evidence>
<evidence type="ECO:0000269" key="4">
    <source>
    </source>
</evidence>
<evidence type="ECO:0000269" key="5">
    <source>
    </source>
</evidence>
<evidence type="ECO:0000305" key="6"/>
<evidence type="ECO:0007829" key="7">
    <source>
        <dbReference type="PDB" id="3QPH"/>
    </source>
</evidence>
<reference key="1">
    <citation type="journal article" date="2000" name="Mol. Microbiol.">
        <title>Evidence of recent lateral gene transfer among hyperthermophilic archaea.</title>
        <authorList>
            <person name="Diruggiero J."/>
            <person name="Dunn D."/>
            <person name="Maeder D.L."/>
            <person name="Holley-Shanks R."/>
            <person name="Chatard J."/>
            <person name="Horlacher R."/>
            <person name="Robb F.T."/>
            <person name="Boos W."/>
            <person name="Weiss R.B."/>
        </authorList>
    </citation>
    <scope>NUCLEOTIDE SEQUENCE [GENOMIC DNA]</scope>
    <source>
        <strain>ATCC 43587 / DSM 3638 / JCM 8422 / Vc1</strain>
    </source>
</reference>
<reference key="2">
    <citation type="journal article" date="1999" name="Genetics">
        <title>Divergence of the hyperthermophilic archaea Pyrococcus furiosus and P. horikoshii inferred from complete genomic sequences.</title>
        <authorList>
            <person name="Maeder D.L."/>
            <person name="Weiss R.B."/>
            <person name="Dunn D.M."/>
            <person name="Cherry J.L."/>
            <person name="Gonzalez J.M."/>
            <person name="DiRuggiero J."/>
            <person name="Robb F.T."/>
        </authorList>
    </citation>
    <scope>NUCLEOTIDE SEQUENCE [LARGE SCALE GENOMIC DNA]</scope>
    <source>
        <strain>ATCC 43587 / DSM 3638 / JCM 8422 / Vc1</strain>
    </source>
</reference>
<reference key="3">
    <citation type="journal article" date="2003" name="J. Biol. Chem.">
        <title>TrmB, a sugar-specific transcriptional regulator of the trehalose/maltose ABC transporter from the hyperthermophilic archaeon Thermococcus litoralis.</title>
        <authorList>
            <person name="Lee S.J."/>
            <person name="Engelmann A."/>
            <person name="Horlacher R."/>
            <person name="Qu Q."/>
            <person name="Vierke G."/>
            <person name="Hebbeln C."/>
            <person name="Thomm M."/>
            <person name="Boos W."/>
        </authorList>
    </citation>
    <scope>FUNCTION</scope>
    <scope>ACTIVITY REGULATION</scope>
    <scope>GENE NAME</scope>
</reference>
<reference key="4">
    <citation type="journal article" date="2005" name="Mol. Microbiol.">
        <title>TrmB, a sugar sensing regulator of ABC transporter genes in Pyrococcus furiosus exhibits dual promoter specificity and is controlled by different inducers.</title>
        <authorList>
            <person name="Lee S.J."/>
            <person name="Moulakakis C."/>
            <person name="Koning S.M."/>
            <person name="Hausner W."/>
            <person name="Thomm M."/>
            <person name="Boos W."/>
        </authorList>
    </citation>
    <scope>FUNCTION</scope>
    <scope>ACTIVITY REGULATION</scope>
    <scope>SUBUNIT</scope>
</reference>
<reference key="5">
    <citation type="journal article" date="2007" name="Mol. Microbiol.">
        <title>Differential signal transduction via TrmB, a sugar sensing transcriptional repressor of Pyrococcus furiosus.</title>
        <authorList>
            <person name="Lee S.J."/>
            <person name="Surma M."/>
            <person name="Seitz S."/>
            <person name="Hausner W."/>
            <person name="Thomm M."/>
            <person name="Boos W."/>
        </authorList>
    </citation>
    <scope>ACTIVITY REGULATION</scope>
    <scope>DNA-BINDING</scope>
    <scope>MUTAGENESIS OF TYR-50 AND THR-52</scope>
</reference>
<reference key="6">
    <citation type="journal article" date="2013" name="Protein Sci.">
        <title>The three-dimensional structure of TrmB, a transcriptional regulator of dual function in the hyperthermophilic archaeon Pyrococcus furiosus in complex with sucrose.</title>
        <authorList>
            <person name="Krug M."/>
            <person name="Lee S.J."/>
            <person name="Boos W."/>
            <person name="Diederichs K."/>
            <person name="Welte W."/>
        </authorList>
    </citation>
    <scope>X-RAY CRYSTALLOGRAPHY (2.99 ANGSTROMS) IN COMPLEX WITH SUCROSE</scope>
    <scope>SUBUNIT</scope>
    <scope>DOMAIN</scope>
</reference>
<accession>Q9HGZ9</accession>
<accession>E7FHI4</accession>
<accession>Q7LYC7</accession>
<feature type="chain" id="PRO_0000428839" description="HTH-type sugar sensing transcriptional regulator TrmB">
    <location>
        <begin position="1"/>
        <end position="338"/>
    </location>
</feature>
<feature type="DNA-binding region" description="H-T-H motif" evidence="1">
    <location>
        <begin position="33"/>
        <end position="54"/>
    </location>
</feature>
<feature type="binding site">
    <location>
        <begin position="303"/>
        <end position="305"/>
    </location>
    <ligand>
        <name>sucrose</name>
        <dbReference type="ChEBI" id="CHEBI:17992"/>
    </ligand>
</feature>
<feature type="binding site">
    <location>
        <begin position="321"/>
        <end position="326"/>
    </location>
    <ligand>
        <name>sucrose</name>
        <dbReference type="ChEBI" id="CHEBI:17992"/>
    </ligand>
</feature>
<feature type="mutagenesis site" description="Loss of DNA-binding." evidence="4">
    <original>Y</original>
    <variation>N</variation>
    <location>
        <position position="50"/>
    </location>
</feature>
<feature type="mutagenesis site" description="Decreases DNA-binding." evidence="4">
    <original>T</original>
    <variation>K</variation>
    <location>
        <position position="52"/>
    </location>
</feature>
<feature type="helix" evidence="7">
    <location>
        <begin position="13"/>
        <end position="19"/>
    </location>
</feature>
<feature type="helix" evidence="7">
    <location>
        <begin position="25"/>
        <end position="35"/>
    </location>
</feature>
<feature type="strand" evidence="7">
    <location>
        <begin position="39"/>
        <end position="41"/>
    </location>
</feature>
<feature type="strand" evidence="7">
    <location>
        <begin position="44"/>
        <end position="46"/>
    </location>
</feature>
<feature type="helix" evidence="7">
    <location>
        <begin position="51"/>
        <end position="59"/>
    </location>
</feature>
<feature type="strand" evidence="7">
    <location>
        <begin position="61"/>
        <end position="65"/>
    </location>
</feature>
<feature type="strand" evidence="7">
    <location>
        <begin position="71"/>
        <end position="74"/>
    </location>
</feature>
<feature type="helix" evidence="7">
    <location>
        <begin position="77"/>
        <end position="100"/>
    </location>
</feature>
<feature type="strand" evidence="7">
    <location>
        <begin position="111"/>
        <end position="116"/>
    </location>
</feature>
<feature type="helix" evidence="7">
    <location>
        <begin position="117"/>
        <end position="130"/>
    </location>
</feature>
<feature type="strand" evidence="7">
    <location>
        <begin position="132"/>
        <end position="139"/>
    </location>
</feature>
<feature type="helix" evidence="7">
    <location>
        <begin position="141"/>
        <end position="143"/>
    </location>
</feature>
<feature type="helix" evidence="7">
    <location>
        <begin position="144"/>
        <end position="156"/>
    </location>
</feature>
<feature type="strand" evidence="7">
    <location>
        <begin position="160"/>
        <end position="167"/>
    </location>
</feature>
<feature type="helix" evidence="7">
    <location>
        <begin position="172"/>
        <end position="174"/>
    </location>
</feature>
<feature type="strand" evidence="7">
    <location>
        <begin position="175"/>
        <end position="184"/>
    </location>
</feature>
<feature type="strand" evidence="7">
    <location>
        <begin position="190"/>
        <end position="195"/>
    </location>
</feature>
<feature type="turn" evidence="7">
    <location>
        <begin position="196"/>
        <end position="198"/>
    </location>
</feature>
<feature type="strand" evidence="7">
    <location>
        <begin position="199"/>
        <end position="203"/>
    </location>
</feature>
<feature type="strand" evidence="7">
    <location>
        <begin position="205"/>
        <end position="207"/>
    </location>
</feature>
<feature type="strand" evidence="7">
    <location>
        <begin position="215"/>
        <end position="218"/>
    </location>
</feature>
<feature type="helix" evidence="7">
    <location>
        <begin position="221"/>
        <end position="237"/>
    </location>
</feature>
<feature type="strand" evidence="7">
    <location>
        <begin position="239"/>
        <end position="246"/>
    </location>
</feature>
<feature type="strand" evidence="7">
    <location>
        <begin position="251"/>
        <end position="254"/>
    </location>
</feature>
<feature type="helix" evidence="7">
    <location>
        <begin position="256"/>
        <end position="266"/>
    </location>
</feature>
<feature type="turn" evidence="7">
    <location>
        <begin position="267"/>
        <end position="269"/>
    </location>
</feature>
<feature type="strand" evidence="7">
    <location>
        <begin position="272"/>
        <end position="280"/>
    </location>
</feature>
<feature type="turn" evidence="7">
    <location>
        <begin position="281"/>
        <end position="283"/>
    </location>
</feature>
<feature type="strand" evidence="7">
    <location>
        <begin position="286"/>
        <end position="299"/>
    </location>
</feature>
<feature type="turn" evidence="7">
    <location>
        <begin position="300"/>
        <end position="303"/>
    </location>
</feature>
<feature type="strand" evidence="7">
    <location>
        <begin position="304"/>
        <end position="311"/>
    </location>
</feature>
<feature type="strand" evidence="7">
    <location>
        <begin position="314"/>
        <end position="319"/>
    </location>
</feature>
<feature type="strand" evidence="7">
    <location>
        <begin position="325"/>
        <end position="337"/>
    </location>
</feature>
<keyword id="KW-0002">3D-structure</keyword>
<keyword id="KW-0238">DNA-binding</keyword>
<keyword id="KW-1185">Reference proteome</keyword>
<keyword id="KW-0678">Repressor</keyword>
<keyword id="KW-0804">Transcription</keyword>
<keyword id="KW-0805">Transcription regulation</keyword>
<organism>
    <name type="scientific">Pyrococcus furiosus (strain ATCC 43587 / DSM 3638 / JCM 8422 / Vc1)</name>
    <dbReference type="NCBI Taxonomy" id="186497"/>
    <lineage>
        <taxon>Archaea</taxon>
        <taxon>Methanobacteriati</taxon>
        <taxon>Methanobacteriota</taxon>
        <taxon>Thermococci</taxon>
        <taxon>Thermococcales</taxon>
        <taxon>Thermococcaceae</taxon>
        <taxon>Pyrococcus</taxon>
    </lineage>
</organism>